<evidence type="ECO:0000250" key="1"/>
<evidence type="ECO:0000255" key="2"/>
<evidence type="ECO:0000256" key="3">
    <source>
        <dbReference type="SAM" id="MobiDB-lite"/>
    </source>
</evidence>
<evidence type="ECO:0000269" key="4">
    <source>
    </source>
</evidence>
<evidence type="ECO:0000305" key="5"/>
<reference key="1">
    <citation type="journal article" date="2007" name="J. Exp. Bot.">
        <title>Localization and domain characterization of Arabidopsis golgin candidates.</title>
        <authorList>
            <person name="Latijnhouwers M."/>
            <person name="Gillespie T."/>
            <person name="Boevink P."/>
            <person name="Kriechbaumer V."/>
            <person name="Hawes C."/>
            <person name="Carvalho C.M."/>
        </authorList>
    </citation>
    <scope>NUCLEOTIDE SEQUENCE [MRNA]</scope>
    <scope>SUBCELLULAR LOCATION</scope>
    <scope>GENE FAMILY</scope>
    <scope>NOMENCLATURE</scope>
</reference>
<reference key="2">
    <citation type="journal article" date="2000" name="Nature">
        <title>Sequence and analysis of chromosome 1 of the plant Arabidopsis thaliana.</title>
        <authorList>
            <person name="Theologis A."/>
            <person name="Ecker J.R."/>
            <person name="Palm C.J."/>
            <person name="Federspiel N.A."/>
            <person name="Kaul S."/>
            <person name="White O."/>
            <person name="Alonso J."/>
            <person name="Altafi H."/>
            <person name="Araujo R."/>
            <person name="Bowman C.L."/>
            <person name="Brooks S.Y."/>
            <person name="Buehler E."/>
            <person name="Chan A."/>
            <person name="Chao Q."/>
            <person name="Chen H."/>
            <person name="Cheuk R.F."/>
            <person name="Chin C.W."/>
            <person name="Chung M.K."/>
            <person name="Conn L."/>
            <person name="Conway A.B."/>
            <person name="Conway A.R."/>
            <person name="Creasy T.H."/>
            <person name="Dewar K."/>
            <person name="Dunn P."/>
            <person name="Etgu P."/>
            <person name="Feldblyum T.V."/>
            <person name="Feng J.-D."/>
            <person name="Fong B."/>
            <person name="Fujii C.Y."/>
            <person name="Gill J.E."/>
            <person name="Goldsmith A.D."/>
            <person name="Haas B."/>
            <person name="Hansen N.F."/>
            <person name="Hughes B."/>
            <person name="Huizar L."/>
            <person name="Hunter J.L."/>
            <person name="Jenkins J."/>
            <person name="Johnson-Hopson C."/>
            <person name="Khan S."/>
            <person name="Khaykin E."/>
            <person name="Kim C.J."/>
            <person name="Koo H.L."/>
            <person name="Kremenetskaia I."/>
            <person name="Kurtz D.B."/>
            <person name="Kwan A."/>
            <person name="Lam B."/>
            <person name="Langin-Hooper S."/>
            <person name="Lee A."/>
            <person name="Lee J.M."/>
            <person name="Lenz C.A."/>
            <person name="Li J.H."/>
            <person name="Li Y.-P."/>
            <person name="Lin X."/>
            <person name="Liu S.X."/>
            <person name="Liu Z.A."/>
            <person name="Luros J.S."/>
            <person name="Maiti R."/>
            <person name="Marziali A."/>
            <person name="Militscher J."/>
            <person name="Miranda M."/>
            <person name="Nguyen M."/>
            <person name="Nierman W.C."/>
            <person name="Osborne B.I."/>
            <person name="Pai G."/>
            <person name="Peterson J."/>
            <person name="Pham P.K."/>
            <person name="Rizzo M."/>
            <person name="Rooney T."/>
            <person name="Rowley D."/>
            <person name="Sakano H."/>
            <person name="Salzberg S.L."/>
            <person name="Schwartz J.R."/>
            <person name="Shinn P."/>
            <person name="Southwick A.M."/>
            <person name="Sun H."/>
            <person name="Tallon L.J."/>
            <person name="Tambunga G."/>
            <person name="Toriumi M.J."/>
            <person name="Town C.D."/>
            <person name="Utterback T."/>
            <person name="Van Aken S."/>
            <person name="Vaysberg M."/>
            <person name="Vysotskaia V.S."/>
            <person name="Walker M."/>
            <person name="Wu D."/>
            <person name="Yu G."/>
            <person name="Fraser C.M."/>
            <person name="Venter J.C."/>
            <person name="Davis R.W."/>
        </authorList>
    </citation>
    <scope>NUCLEOTIDE SEQUENCE [LARGE SCALE GENOMIC DNA]</scope>
    <source>
        <strain>cv. Columbia</strain>
    </source>
</reference>
<reference key="3">
    <citation type="journal article" date="2017" name="Plant J.">
        <title>Araport11: a complete reannotation of the Arabidopsis thaliana reference genome.</title>
        <authorList>
            <person name="Cheng C.Y."/>
            <person name="Krishnakumar V."/>
            <person name="Chan A.P."/>
            <person name="Thibaud-Nissen F."/>
            <person name="Schobel S."/>
            <person name="Town C.D."/>
        </authorList>
    </citation>
    <scope>GENOME REANNOTATION</scope>
    <source>
        <strain>cv. Columbia</strain>
    </source>
</reference>
<reference key="4">
    <citation type="journal article" date="2009" name="Plant Physiol.">
        <title>Large-scale Arabidopsis phosphoproteome profiling reveals novel chloroplast kinase substrates and phosphorylation networks.</title>
        <authorList>
            <person name="Reiland S."/>
            <person name="Messerli G."/>
            <person name="Baerenfaller K."/>
            <person name="Gerrits B."/>
            <person name="Endler A."/>
            <person name="Grossmann J."/>
            <person name="Gruissem W."/>
            <person name="Baginsky S."/>
        </authorList>
    </citation>
    <scope>IDENTIFICATION BY MASS SPECTROMETRY [LARGE SCALE ANALYSIS]</scope>
</reference>
<sequence length="668" mass="74787">MANWISSKLKAAETILQQLDQQAADSLRKDEKSETHDEVFETSPKSGSSPVSLKDQLRKKTYEGSDSGSGSQRNSTEQKPSYLSSSKKVRKPDQSHERTSAPSQSLTQDNTKLTDNDWTELLSTPNQRTSTSTSRSPGGTSAIRGLKKDGKRHGNLGKNPLVSDGKKSSSSNVVNSRGRPQKQTNKEPSDKEVSSPSDADMKNRNAPRDIFVNSTHKESEKDVSGKTPPLDDSRRSANETLPRETSPSVGKRDGRESRRSSVWGKQVREEVSQSNVSDGLTRKESSLSSDESESDYESDSSTDSERERQREERRRRRERVFAEKVATKAVAVIKERENMVARLEGEKLSLEKIVEERAKQQAQEAAELQTNMMETLEAADLEKQKHNNTRMEVLTRLAGLEAENAELTRSLAAGQKKLETQIDQVAVLKQQVELKESTLEELKRNTFNIGGRGTTLKQLDTSRGDKFEHQMLEAEISLLTDKIGRLQDKATKLEADIEMMRKELEEPTEVEIELKRRLNQLTDHLIQKQSQVEALSSEKATILFRIEAVSRLIEENKGMSATEASSQDLEAGDWELSGSKFKPAFQDKIRSGKKHLGWLVMQLNAIFISGTVFLRRNPTAKIWAVVYLVCLHLWVLYILLSHSDASSSGELRSGAVISLENFSNSSLQ</sequence>
<accession>B0F9L7</accession>
<accession>Q9LM30</accession>
<accession>Q9LMR9</accession>
<keyword id="KW-0175">Coiled coil</keyword>
<keyword id="KW-0333">Golgi apparatus</keyword>
<keyword id="KW-0472">Membrane</keyword>
<keyword id="KW-1185">Reference proteome</keyword>
<keyword id="KW-0812">Transmembrane</keyword>
<keyword id="KW-1133">Transmembrane helix</keyword>
<name>GOGC2_ARATH</name>
<proteinExistence type="evidence at protein level"/>
<organism>
    <name type="scientific">Arabidopsis thaliana</name>
    <name type="common">Mouse-ear cress</name>
    <dbReference type="NCBI Taxonomy" id="3702"/>
    <lineage>
        <taxon>Eukaryota</taxon>
        <taxon>Viridiplantae</taxon>
        <taxon>Streptophyta</taxon>
        <taxon>Embryophyta</taxon>
        <taxon>Tracheophyta</taxon>
        <taxon>Spermatophyta</taxon>
        <taxon>Magnoliopsida</taxon>
        <taxon>eudicotyledons</taxon>
        <taxon>Gunneridae</taxon>
        <taxon>Pentapetalae</taxon>
        <taxon>rosids</taxon>
        <taxon>malvids</taxon>
        <taxon>Brassicales</taxon>
        <taxon>Brassicaceae</taxon>
        <taxon>Camelineae</taxon>
        <taxon>Arabidopsis</taxon>
    </lineage>
</organism>
<feature type="chain" id="PRO_0000348536" description="Golgin candidate 2">
    <location>
        <begin position="1"/>
        <end position="668"/>
    </location>
</feature>
<feature type="transmembrane region" description="Helical" evidence="2">
    <location>
        <begin position="594"/>
        <end position="614"/>
    </location>
</feature>
<feature type="transmembrane region" description="Helical" evidence="2">
    <location>
        <begin position="622"/>
        <end position="642"/>
    </location>
</feature>
<feature type="region of interest" description="Disordered" evidence="3">
    <location>
        <begin position="22"/>
        <end position="317"/>
    </location>
</feature>
<feature type="coiled-coil region" evidence="2">
    <location>
        <begin position="331"/>
        <end position="539"/>
    </location>
</feature>
<feature type="compositionally biased region" description="Basic and acidic residues" evidence="3">
    <location>
        <begin position="26"/>
        <end position="39"/>
    </location>
</feature>
<feature type="compositionally biased region" description="Polar residues" evidence="3">
    <location>
        <begin position="64"/>
        <end position="86"/>
    </location>
</feature>
<feature type="compositionally biased region" description="Polar residues" evidence="3">
    <location>
        <begin position="100"/>
        <end position="113"/>
    </location>
</feature>
<feature type="compositionally biased region" description="Low complexity" evidence="3">
    <location>
        <begin position="123"/>
        <end position="141"/>
    </location>
</feature>
<feature type="compositionally biased region" description="Low complexity" evidence="3">
    <location>
        <begin position="168"/>
        <end position="178"/>
    </location>
</feature>
<feature type="compositionally biased region" description="Basic and acidic residues" evidence="3">
    <location>
        <begin position="184"/>
        <end position="207"/>
    </location>
</feature>
<feature type="compositionally biased region" description="Basic and acidic residues" evidence="3">
    <location>
        <begin position="215"/>
        <end position="237"/>
    </location>
</feature>
<feature type="compositionally biased region" description="Basic and acidic residues" evidence="3">
    <location>
        <begin position="250"/>
        <end position="259"/>
    </location>
</feature>
<feature type="compositionally biased region" description="Acidic residues" evidence="3">
    <location>
        <begin position="290"/>
        <end position="302"/>
    </location>
</feature>
<feature type="compositionally biased region" description="Basic and acidic residues" evidence="3">
    <location>
        <begin position="303"/>
        <end position="312"/>
    </location>
</feature>
<gene>
    <name type="primary">GC2</name>
    <name type="ordered locus">At1g18190</name>
    <name type="ORF">T10F20.19</name>
    <name type="ORF">T10O22.16</name>
</gene>
<dbReference type="EMBL" id="EU249330">
    <property type="protein sequence ID" value="ABY67250.1"/>
    <property type="molecule type" value="mRNA"/>
</dbReference>
<dbReference type="EMBL" id="AC034107">
    <property type="protein sequence ID" value="AAF97835.1"/>
    <property type="status" value="ALT_SEQ"/>
    <property type="molecule type" value="Genomic_DNA"/>
</dbReference>
<dbReference type="EMBL" id="AC069551">
    <property type="protein sequence ID" value="AAF78387.1"/>
    <property type="status" value="ALT_SEQ"/>
    <property type="molecule type" value="Genomic_DNA"/>
</dbReference>
<dbReference type="EMBL" id="CP002684">
    <property type="protein sequence ID" value="AEE29685.1"/>
    <property type="molecule type" value="Genomic_DNA"/>
</dbReference>
<dbReference type="RefSeq" id="NP_173257.2">
    <property type="nucleotide sequence ID" value="NM_101679.4"/>
</dbReference>
<dbReference type="SMR" id="B0F9L7"/>
<dbReference type="FunCoup" id="B0F9L7">
    <property type="interactions" value="746"/>
</dbReference>
<dbReference type="STRING" id="3702.B0F9L7"/>
<dbReference type="iPTMnet" id="B0F9L7"/>
<dbReference type="PaxDb" id="3702-AT1G18190.1"/>
<dbReference type="ProteomicsDB" id="248438"/>
<dbReference type="EnsemblPlants" id="AT1G18190.1">
    <property type="protein sequence ID" value="AT1G18190.1"/>
    <property type="gene ID" value="AT1G18190"/>
</dbReference>
<dbReference type="GeneID" id="838398"/>
<dbReference type="Gramene" id="AT1G18190.1">
    <property type="protein sequence ID" value="AT1G18190.1"/>
    <property type="gene ID" value="AT1G18190"/>
</dbReference>
<dbReference type="KEGG" id="ath:AT1G18190"/>
<dbReference type="Araport" id="AT1G18190"/>
<dbReference type="TAIR" id="AT1G18190">
    <property type="gene designation" value="GC2"/>
</dbReference>
<dbReference type="eggNOG" id="ENOG502QVAS">
    <property type="taxonomic scope" value="Eukaryota"/>
</dbReference>
<dbReference type="HOGENOM" id="CLU_020951_1_0_1"/>
<dbReference type="InParanoid" id="B0F9L7"/>
<dbReference type="OMA" id="TTMMETM"/>
<dbReference type="PhylomeDB" id="B0F9L7"/>
<dbReference type="PRO" id="PR:B0F9L7"/>
<dbReference type="Proteomes" id="UP000006548">
    <property type="component" value="Chromosome 1"/>
</dbReference>
<dbReference type="ExpressionAtlas" id="B0F9L7">
    <property type="expression patterns" value="baseline and differential"/>
</dbReference>
<dbReference type="GO" id="GO:0005794">
    <property type="term" value="C:Golgi apparatus"/>
    <property type="evidence" value="ECO:0000314"/>
    <property type="project" value="TAIR"/>
</dbReference>
<dbReference type="GO" id="GO:0000139">
    <property type="term" value="C:Golgi membrane"/>
    <property type="evidence" value="ECO:0007669"/>
    <property type="project" value="UniProtKB-SubCell"/>
</dbReference>
<dbReference type="GO" id="GO:0007030">
    <property type="term" value="P:Golgi organization"/>
    <property type="evidence" value="ECO:0007669"/>
    <property type="project" value="InterPro"/>
</dbReference>
<dbReference type="InterPro" id="IPR019177">
    <property type="entry name" value="Golgin_subfamily_A_member_5"/>
</dbReference>
<dbReference type="PANTHER" id="PTHR13815:SF5">
    <property type="entry name" value="GOLGIN CANDIDATE 2"/>
    <property type="match status" value="1"/>
</dbReference>
<dbReference type="PANTHER" id="PTHR13815">
    <property type="entry name" value="GOLGIN-84"/>
    <property type="match status" value="1"/>
</dbReference>
<dbReference type="Pfam" id="PF09787">
    <property type="entry name" value="Golgin_A5"/>
    <property type="match status" value="1"/>
</dbReference>
<protein>
    <recommendedName>
        <fullName>Golgin candidate 2</fullName>
        <shortName>AtGC2</shortName>
    </recommendedName>
</protein>
<comment type="function">
    <text evidence="1">Golgi matrix protein playing a role in tethering of vesicles to Golgi membranes and in maintaining the overall structure of the Golgi apparatus.</text>
</comment>
<comment type="subcellular location">
    <subcellularLocation>
        <location evidence="4">Golgi apparatus membrane</location>
        <topology evidence="4">Multi-pass membrane protein</topology>
    </subcellularLocation>
    <text>Probably located to cisternal rims of cis or medial Golgi.</text>
</comment>
<comment type="domain">
    <text>The C-terminal domain (508-668) is necessary and sufficient for Golgi targeting.</text>
</comment>
<comment type="sequence caution" evidence="5">
    <conflict type="erroneous gene model prediction">
        <sequence resource="EMBL-CDS" id="AAF78387"/>
    </conflict>
</comment>
<comment type="sequence caution" evidence="5">
    <conflict type="erroneous gene model prediction">
        <sequence resource="EMBL-CDS" id="AAF97835"/>
    </conflict>
</comment>